<accession>Q6GEI6</accession>
<feature type="chain" id="PRO_0000129617" description="Large ribosomal subunit protein uL2">
    <location>
        <begin position="1"/>
        <end position="277"/>
    </location>
</feature>
<feature type="region of interest" description="Disordered" evidence="2">
    <location>
        <begin position="36"/>
        <end position="55"/>
    </location>
</feature>
<feature type="region of interest" description="Disordered" evidence="2">
    <location>
        <begin position="213"/>
        <end position="277"/>
    </location>
</feature>
<reference key="1">
    <citation type="journal article" date="2004" name="Proc. Natl. Acad. Sci. U.S.A.">
        <title>Complete genomes of two clinical Staphylococcus aureus strains: evidence for the rapid evolution of virulence and drug resistance.</title>
        <authorList>
            <person name="Holden M.T.G."/>
            <person name="Feil E.J."/>
            <person name="Lindsay J.A."/>
            <person name="Peacock S.J."/>
            <person name="Day N.P.J."/>
            <person name="Enright M.C."/>
            <person name="Foster T.J."/>
            <person name="Moore C.E."/>
            <person name="Hurst L."/>
            <person name="Atkin R."/>
            <person name="Barron A."/>
            <person name="Bason N."/>
            <person name="Bentley S.D."/>
            <person name="Chillingworth C."/>
            <person name="Chillingworth T."/>
            <person name="Churcher C."/>
            <person name="Clark L."/>
            <person name="Corton C."/>
            <person name="Cronin A."/>
            <person name="Doggett J."/>
            <person name="Dowd L."/>
            <person name="Feltwell T."/>
            <person name="Hance Z."/>
            <person name="Harris B."/>
            <person name="Hauser H."/>
            <person name="Holroyd S."/>
            <person name="Jagels K."/>
            <person name="James K.D."/>
            <person name="Lennard N."/>
            <person name="Line A."/>
            <person name="Mayes R."/>
            <person name="Moule S."/>
            <person name="Mungall K."/>
            <person name="Ormond D."/>
            <person name="Quail M.A."/>
            <person name="Rabbinowitsch E."/>
            <person name="Rutherford K.M."/>
            <person name="Sanders M."/>
            <person name="Sharp S."/>
            <person name="Simmonds M."/>
            <person name="Stevens K."/>
            <person name="Whitehead S."/>
            <person name="Barrell B.G."/>
            <person name="Spratt B.G."/>
            <person name="Parkhill J."/>
        </authorList>
    </citation>
    <scope>NUCLEOTIDE SEQUENCE [LARGE SCALE GENOMIC DNA]</scope>
    <source>
        <strain>MRSA252</strain>
    </source>
</reference>
<dbReference type="EMBL" id="BX571856">
    <property type="protein sequence ID" value="CAG41313.1"/>
    <property type="molecule type" value="Genomic_DNA"/>
</dbReference>
<dbReference type="RefSeq" id="WP_000985472.1">
    <property type="nucleotide sequence ID" value="NC_002952.2"/>
</dbReference>
<dbReference type="SMR" id="Q6GEI6"/>
<dbReference type="GeneID" id="98346559"/>
<dbReference type="KEGG" id="sar:SAR2332"/>
<dbReference type="HOGENOM" id="CLU_036235_2_1_9"/>
<dbReference type="Proteomes" id="UP000000596">
    <property type="component" value="Chromosome"/>
</dbReference>
<dbReference type="GO" id="GO:0015934">
    <property type="term" value="C:large ribosomal subunit"/>
    <property type="evidence" value="ECO:0007669"/>
    <property type="project" value="InterPro"/>
</dbReference>
<dbReference type="GO" id="GO:0019843">
    <property type="term" value="F:rRNA binding"/>
    <property type="evidence" value="ECO:0007669"/>
    <property type="project" value="UniProtKB-UniRule"/>
</dbReference>
<dbReference type="GO" id="GO:0003735">
    <property type="term" value="F:structural constituent of ribosome"/>
    <property type="evidence" value="ECO:0007669"/>
    <property type="project" value="InterPro"/>
</dbReference>
<dbReference type="GO" id="GO:0016740">
    <property type="term" value="F:transferase activity"/>
    <property type="evidence" value="ECO:0007669"/>
    <property type="project" value="InterPro"/>
</dbReference>
<dbReference type="GO" id="GO:0002181">
    <property type="term" value="P:cytoplasmic translation"/>
    <property type="evidence" value="ECO:0007669"/>
    <property type="project" value="TreeGrafter"/>
</dbReference>
<dbReference type="FunFam" id="2.30.30.30:FF:000001">
    <property type="entry name" value="50S ribosomal protein L2"/>
    <property type="match status" value="1"/>
</dbReference>
<dbReference type="FunFam" id="2.40.50.140:FF:000003">
    <property type="entry name" value="50S ribosomal protein L2"/>
    <property type="match status" value="1"/>
</dbReference>
<dbReference type="FunFam" id="4.10.950.10:FF:000001">
    <property type="entry name" value="50S ribosomal protein L2"/>
    <property type="match status" value="1"/>
</dbReference>
<dbReference type="Gene3D" id="2.30.30.30">
    <property type="match status" value="1"/>
</dbReference>
<dbReference type="Gene3D" id="2.40.50.140">
    <property type="entry name" value="Nucleic acid-binding proteins"/>
    <property type="match status" value="1"/>
</dbReference>
<dbReference type="Gene3D" id="4.10.950.10">
    <property type="entry name" value="Ribosomal protein L2, domain 3"/>
    <property type="match status" value="1"/>
</dbReference>
<dbReference type="HAMAP" id="MF_01320_B">
    <property type="entry name" value="Ribosomal_uL2_B"/>
    <property type="match status" value="1"/>
</dbReference>
<dbReference type="InterPro" id="IPR012340">
    <property type="entry name" value="NA-bd_OB-fold"/>
</dbReference>
<dbReference type="InterPro" id="IPR014722">
    <property type="entry name" value="Rib_uL2_dom2"/>
</dbReference>
<dbReference type="InterPro" id="IPR002171">
    <property type="entry name" value="Ribosomal_uL2"/>
</dbReference>
<dbReference type="InterPro" id="IPR005880">
    <property type="entry name" value="Ribosomal_uL2_bac/org-type"/>
</dbReference>
<dbReference type="InterPro" id="IPR022669">
    <property type="entry name" value="Ribosomal_uL2_C"/>
</dbReference>
<dbReference type="InterPro" id="IPR022671">
    <property type="entry name" value="Ribosomal_uL2_CS"/>
</dbReference>
<dbReference type="InterPro" id="IPR014726">
    <property type="entry name" value="Ribosomal_uL2_dom3"/>
</dbReference>
<dbReference type="InterPro" id="IPR022666">
    <property type="entry name" value="Ribosomal_uL2_RNA-bd_dom"/>
</dbReference>
<dbReference type="InterPro" id="IPR008991">
    <property type="entry name" value="Translation_prot_SH3-like_sf"/>
</dbReference>
<dbReference type="NCBIfam" id="TIGR01171">
    <property type="entry name" value="rplB_bact"/>
    <property type="match status" value="1"/>
</dbReference>
<dbReference type="PANTHER" id="PTHR13691:SF5">
    <property type="entry name" value="LARGE RIBOSOMAL SUBUNIT PROTEIN UL2M"/>
    <property type="match status" value="1"/>
</dbReference>
<dbReference type="PANTHER" id="PTHR13691">
    <property type="entry name" value="RIBOSOMAL PROTEIN L2"/>
    <property type="match status" value="1"/>
</dbReference>
<dbReference type="Pfam" id="PF00181">
    <property type="entry name" value="Ribosomal_L2"/>
    <property type="match status" value="1"/>
</dbReference>
<dbReference type="Pfam" id="PF03947">
    <property type="entry name" value="Ribosomal_L2_C"/>
    <property type="match status" value="1"/>
</dbReference>
<dbReference type="PIRSF" id="PIRSF002158">
    <property type="entry name" value="Ribosomal_L2"/>
    <property type="match status" value="1"/>
</dbReference>
<dbReference type="SMART" id="SM01383">
    <property type="entry name" value="Ribosomal_L2"/>
    <property type="match status" value="1"/>
</dbReference>
<dbReference type="SMART" id="SM01382">
    <property type="entry name" value="Ribosomal_L2_C"/>
    <property type="match status" value="1"/>
</dbReference>
<dbReference type="SUPFAM" id="SSF50249">
    <property type="entry name" value="Nucleic acid-binding proteins"/>
    <property type="match status" value="1"/>
</dbReference>
<dbReference type="SUPFAM" id="SSF50104">
    <property type="entry name" value="Translation proteins SH3-like domain"/>
    <property type="match status" value="1"/>
</dbReference>
<dbReference type="PROSITE" id="PS00467">
    <property type="entry name" value="RIBOSOMAL_L2"/>
    <property type="match status" value="1"/>
</dbReference>
<sequence length="277" mass="30155">MAIKKYKPITNGRRNMTSLDFAEITKTTPEKSLLKPLPKKAGRNNQGKLTVRHHGGGHKRQYRVIDFKRNKDGINAKVDSIQYDPNRSANIALVVYADGEKRYIIAPKGLEVGQIVESGAEADIKVGNALPLQNIPVGTVVHNIELKPGKGGQIARSAGASAQVLGKEGKYVLIRLRSGEVRMILSTCRATIGQVGNLQHELVNVGKAGRSRWKGIRPTVRGSVMNPNDHPHGGGEGRAPIGRPSPMSPWGKPTLGKKTRRGKKSSDKLIVRGRKKK</sequence>
<organism>
    <name type="scientific">Staphylococcus aureus (strain MRSA252)</name>
    <dbReference type="NCBI Taxonomy" id="282458"/>
    <lineage>
        <taxon>Bacteria</taxon>
        <taxon>Bacillati</taxon>
        <taxon>Bacillota</taxon>
        <taxon>Bacilli</taxon>
        <taxon>Bacillales</taxon>
        <taxon>Staphylococcaceae</taxon>
        <taxon>Staphylococcus</taxon>
    </lineage>
</organism>
<proteinExistence type="inferred from homology"/>
<comment type="function">
    <text evidence="1">One of the primary rRNA binding proteins. Required for association of the 30S and 50S subunits to form the 70S ribosome, for tRNA binding and peptide bond formation. It has been suggested to have peptidyltransferase activity; this is somewhat controversial. Makes several contacts with the 16S rRNA in the 70S ribosome.</text>
</comment>
<comment type="subunit">
    <text evidence="1">Part of the 50S ribosomal subunit. Forms a bridge to the 30S subunit in the 70S ribosome.</text>
</comment>
<comment type="similarity">
    <text evidence="1">Belongs to the universal ribosomal protein uL2 family.</text>
</comment>
<gene>
    <name evidence="1" type="primary">rplB</name>
    <name type="ordered locus">SAR2332</name>
</gene>
<keyword id="KW-0687">Ribonucleoprotein</keyword>
<keyword id="KW-0689">Ribosomal protein</keyword>
<keyword id="KW-0694">RNA-binding</keyword>
<keyword id="KW-0699">rRNA-binding</keyword>
<protein>
    <recommendedName>
        <fullName evidence="1">Large ribosomal subunit protein uL2</fullName>
    </recommendedName>
    <alternativeName>
        <fullName evidence="3">50S ribosomal protein L2</fullName>
    </alternativeName>
</protein>
<name>RL2_STAAR</name>
<evidence type="ECO:0000255" key="1">
    <source>
        <dbReference type="HAMAP-Rule" id="MF_01320"/>
    </source>
</evidence>
<evidence type="ECO:0000256" key="2">
    <source>
        <dbReference type="SAM" id="MobiDB-lite"/>
    </source>
</evidence>
<evidence type="ECO:0000305" key="3"/>